<dbReference type="EC" id="2.3.1.181" evidence="1"/>
<dbReference type="EMBL" id="CP000686">
    <property type="protein sequence ID" value="ABQ89452.1"/>
    <property type="molecule type" value="Genomic_DNA"/>
</dbReference>
<dbReference type="RefSeq" id="WP_011955805.1">
    <property type="nucleotide sequence ID" value="NC_009523.1"/>
</dbReference>
<dbReference type="SMR" id="A5US49"/>
<dbReference type="STRING" id="357808.RoseRS_1043"/>
<dbReference type="KEGG" id="rrs:RoseRS_1043"/>
<dbReference type="eggNOG" id="COG0321">
    <property type="taxonomic scope" value="Bacteria"/>
</dbReference>
<dbReference type="HOGENOM" id="CLU_035168_1_3_0"/>
<dbReference type="OrthoDB" id="9787061at2"/>
<dbReference type="UniPathway" id="UPA00538">
    <property type="reaction ID" value="UER00592"/>
</dbReference>
<dbReference type="Proteomes" id="UP000006554">
    <property type="component" value="Chromosome"/>
</dbReference>
<dbReference type="GO" id="GO:0005737">
    <property type="term" value="C:cytoplasm"/>
    <property type="evidence" value="ECO:0007669"/>
    <property type="project" value="UniProtKB-SubCell"/>
</dbReference>
<dbReference type="GO" id="GO:0033819">
    <property type="term" value="F:lipoyl(octanoyl) transferase activity"/>
    <property type="evidence" value="ECO:0007669"/>
    <property type="project" value="UniProtKB-EC"/>
</dbReference>
<dbReference type="GO" id="GO:0036211">
    <property type="term" value="P:protein modification process"/>
    <property type="evidence" value="ECO:0007669"/>
    <property type="project" value="InterPro"/>
</dbReference>
<dbReference type="CDD" id="cd16444">
    <property type="entry name" value="LipB"/>
    <property type="match status" value="1"/>
</dbReference>
<dbReference type="Gene3D" id="3.30.930.10">
    <property type="entry name" value="Bira Bifunctional Protein, Domain 2"/>
    <property type="match status" value="1"/>
</dbReference>
<dbReference type="HAMAP" id="MF_00013">
    <property type="entry name" value="LipB"/>
    <property type="match status" value="1"/>
</dbReference>
<dbReference type="InterPro" id="IPR045864">
    <property type="entry name" value="aa-tRNA-synth_II/BPL/LPL"/>
</dbReference>
<dbReference type="InterPro" id="IPR004143">
    <property type="entry name" value="BPL_LPL_catalytic"/>
</dbReference>
<dbReference type="InterPro" id="IPR000544">
    <property type="entry name" value="Octanoyltransferase"/>
</dbReference>
<dbReference type="InterPro" id="IPR020605">
    <property type="entry name" value="Octanoyltransferase_CS"/>
</dbReference>
<dbReference type="NCBIfam" id="TIGR00214">
    <property type="entry name" value="lipB"/>
    <property type="match status" value="1"/>
</dbReference>
<dbReference type="NCBIfam" id="NF010925">
    <property type="entry name" value="PRK14345.1"/>
    <property type="match status" value="1"/>
</dbReference>
<dbReference type="PANTHER" id="PTHR10993:SF7">
    <property type="entry name" value="LIPOYLTRANSFERASE 2, MITOCHONDRIAL-RELATED"/>
    <property type="match status" value="1"/>
</dbReference>
<dbReference type="PANTHER" id="PTHR10993">
    <property type="entry name" value="OCTANOYLTRANSFERASE"/>
    <property type="match status" value="1"/>
</dbReference>
<dbReference type="Pfam" id="PF21948">
    <property type="entry name" value="LplA-B_cat"/>
    <property type="match status" value="1"/>
</dbReference>
<dbReference type="PIRSF" id="PIRSF016262">
    <property type="entry name" value="LPLase"/>
    <property type="match status" value="1"/>
</dbReference>
<dbReference type="SUPFAM" id="SSF55681">
    <property type="entry name" value="Class II aaRS and biotin synthetases"/>
    <property type="match status" value="1"/>
</dbReference>
<dbReference type="PROSITE" id="PS51733">
    <property type="entry name" value="BPL_LPL_CATALYTIC"/>
    <property type="match status" value="1"/>
</dbReference>
<dbReference type="PROSITE" id="PS01313">
    <property type="entry name" value="LIPB"/>
    <property type="match status" value="1"/>
</dbReference>
<proteinExistence type="inferred from homology"/>
<accession>A5US49</accession>
<comment type="function">
    <text evidence="1">Catalyzes the transfer of endogenously produced octanoic acid from octanoyl-acyl-carrier-protein onto the lipoyl domains of lipoate-dependent enzymes. Lipoyl-ACP can also act as a substrate although octanoyl-ACP is likely to be the physiological substrate.</text>
</comment>
<comment type="catalytic activity">
    <reaction evidence="1">
        <text>octanoyl-[ACP] + L-lysyl-[protein] = N(6)-octanoyl-L-lysyl-[protein] + holo-[ACP] + H(+)</text>
        <dbReference type="Rhea" id="RHEA:17665"/>
        <dbReference type="Rhea" id="RHEA-COMP:9636"/>
        <dbReference type="Rhea" id="RHEA-COMP:9685"/>
        <dbReference type="Rhea" id="RHEA-COMP:9752"/>
        <dbReference type="Rhea" id="RHEA-COMP:9928"/>
        <dbReference type="ChEBI" id="CHEBI:15378"/>
        <dbReference type="ChEBI" id="CHEBI:29969"/>
        <dbReference type="ChEBI" id="CHEBI:64479"/>
        <dbReference type="ChEBI" id="CHEBI:78463"/>
        <dbReference type="ChEBI" id="CHEBI:78809"/>
        <dbReference type="EC" id="2.3.1.181"/>
    </reaction>
</comment>
<comment type="pathway">
    <text evidence="1">Protein modification; protein lipoylation via endogenous pathway; protein N(6)-(lipoyl)lysine from octanoyl-[acyl-carrier-protein]: step 1/2.</text>
</comment>
<comment type="subcellular location">
    <subcellularLocation>
        <location evidence="1">Cytoplasm</location>
    </subcellularLocation>
</comment>
<comment type="miscellaneous">
    <text evidence="1">In the reaction, the free carboxyl group of octanoic acid is attached via an amide linkage to the epsilon-amino group of a specific lysine residue of lipoyl domains of lipoate-dependent enzymes.</text>
</comment>
<comment type="similarity">
    <text evidence="1">Belongs to the LipB family.</text>
</comment>
<keyword id="KW-0012">Acyltransferase</keyword>
<keyword id="KW-0963">Cytoplasm</keyword>
<keyword id="KW-0808">Transferase</keyword>
<organism>
    <name type="scientific">Roseiflexus sp. (strain RS-1)</name>
    <dbReference type="NCBI Taxonomy" id="357808"/>
    <lineage>
        <taxon>Bacteria</taxon>
        <taxon>Bacillati</taxon>
        <taxon>Chloroflexota</taxon>
        <taxon>Chloroflexia</taxon>
        <taxon>Chloroflexales</taxon>
        <taxon>Roseiflexineae</taxon>
        <taxon>Roseiflexaceae</taxon>
        <taxon>Roseiflexus</taxon>
    </lineage>
</organism>
<reference key="1">
    <citation type="submission" date="2007-04" db="EMBL/GenBank/DDBJ databases">
        <title>Complete sequence of Roseiflexus sp. RS-1.</title>
        <authorList>
            <consortium name="US DOE Joint Genome Institute"/>
            <person name="Copeland A."/>
            <person name="Lucas S."/>
            <person name="Lapidus A."/>
            <person name="Barry K."/>
            <person name="Detter J.C."/>
            <person name="Glavina del Rio T."/>
            <person name="Hammon N."/>
            <person name="Israni S."/>
            <person name="Dalin E."/>
            <person name="Tice H."/>
            <person name="Pitluck S."/>
            <person name="Chertkov O."/>
            <person name="Brettin T."/>
            <person name="Bruce D."/>
            <person name="Han C."/>
            <person name="Schmutz J."/>
            <person name="Larimer F."/>
            <person name="Land M."/>
            <person name="Hauser L."/>
            <person name="Kyrpides N."/>
            <person name="Mikhailova N."/>
            <person name="Bryant D.A."/>
            <person name="Richardson P."/>
        </authorList>
    </citation>
    <scope>NUCLEOTIDE SEQUENCE [LARGE SCALE GENOMIC DNA]</scope>
    <source>
        <strain>RS-1</strain>
    </source>
</reference>
<name>LIPB_ROSS1</name>
<sequence>MRTLTIYHLGLIDYRTAWDVQRRIARARSAGQVGDTLLLLEHPPTITLGSRASTEHLLVPAEHLSAEGVTVVQSDRGGGATYHAPGQIVAYPIFKLLQHGRDIGRYLRGLEESVIRVLRDDGLIGERVPGLTGVWVRNGAAKICAIGIKVSAGGVTTHGLALNVNIDLRGFDLIVPCGVHGRGVTSMSAELGEVVAMSSVAERLIGHLCAVFDLEPAVVVTAGQWTAHLPAAERDHLAQR</sequence>
<gene>
    <name evidence="1" type="primary">lipB</name>
    <name type="ordered locus">RoseRS_1043</name>
</gene>
<protein>
    <recommendedName>
        <fullName evidence="1">Octanoyltransferase</fullName>
        <ecNumber evidence="1">2.3.1.181</ecNumber>
    </recommendedName>
    <alternativeName>
        <fullName evidence="1">Lipoate-protein ligase B</fullName>
    </alternativeName>
    <alternativeName>
        <fullName evidence="1">Lipoyl/octanoyl transferase</fullName>
    </alternativeName>
    <alternativeName>
        <fullName evidence="1">Octanoyl-[acyl-carrier-protein]-protein N-octanoyltransferase</fullName>
    </alternativeName>
</protein>
<feature type="chain" id="PRO_0000321666" description="Octanoyltransferase">
    <location>
        <begin position="1"/>
        <end position="240"/>
    </location>
</feature>
<feature type="domain" description="BPL/LPL catalytic" evidence="2">
    <location>
        <begin position="31"/>
        <end position="216"/>
    </location>
</feature>
<feature type="active site" description="Acyl-thioester intermediate" evidence="1">
    <location>
        <position position="177"/>
    </location>
</feature>
<feature type="binding site" evidence="1">
    <location>
        <begin position="76"/>
        <end position="83"/>
    </location>
    <ligand>
        <name>substrate</name>
    </ligand>
</feature>
<feature type="binding site" evidence="1">
    <location>
        <begin position="145"/>
        <end position="147"/>
    </location>
    <ligand>
        <name>substrate</name>
    </ligand>
</feature>
<feature type="binding site" evidence="1">
    <location>
        <begin position="159"/>
        <end position="161"/>
    </location>
    <ligand>
        <name>substrate</name>
    </ligand>
</feature>
<feature type="site" description="Lowers pKa of active site Cys" evidence="1">
    <location>
        <position position="142"/>
    </location>
</feature>
<evidence type="ECO:0000255" key="1">
    <source>
        <dbReference type="HAMAP-Rule" id="MF_00013"/>
    </source>
</evidence>
<evidence type="ECO:0000255" key="2">
    <source>
        <dbReference type="PROSITE-ProRule" id="PRU01067"/>
    </source>
</evidence>